<organism>
    <name type="scientific">Acetivibrio thermocellus (strain ATCC 27405 / DSM 1237 / JCM 9322 / NBRC 103400 / NCIMB 10682 / NRRL B-4536 / VPI 7372)</name>
    <name type="common">Clostridium thermocellum</name>
    <dbReference type="NCBI Taxonomy" id="203119"/>
    <lineage>
        <taxon>Bacteria</taxon>
        <taxon>Bacillati</taxon>
        <taxon>Bacillota</taxon>
        <taxon>Clostridia</taxon>
        <taxon>Eubacteriales</taxon>
        <taxon>Oscillospiraceae</taxon>
        <taxon>Acetivibrio</taxon>
    </lineage>
</organism>
<evidence type="ECO:0000255" key="1">
    <source>
        <dbReference type="HAMAP-Rule" id="MF_01274"/>
    </source>
</evidence>
<dbReference type="EC" id="2.7.1.33" evidence="1"/>
<dbReference type="EMBL" id="CP000568">
    <property type="protein sequence ID" value="ABN53788.1"/>
    <property type="molecule type" value="Genomic_DNA"/>
</dbReference>
<dbReference type="RefSeq" id="WP_003515466.1">
    <property type="nucleotide sequence ID" value="NC_009012.1"/>
</dbReference>
<dbReference type="SMR" id="A3DIK9"/>
<dbReference type="STRING" id="203119.Cthe_2588"/>
<dbReference type="GeneID" id="35803534"/>
<dbReference type="KEGG" id="cth:Cthe_2588"/>
<dbReference type="eggNOG" id="COG1521">
    <property type="taxonomic scope" value="Bacteria"/>
</dbReference>
<dbReference type="HOGENOM" id="CLU_066627_1_0_9"/>
<dbReference type="OrthoDB" id="9804707at2"/>
<dbReference type="UniPathway" id="UPA00241">
    <property type="reaction ID" value="UER00352"/>
</dbReference>
<dbReference type="Proteomes" id="UP000002145">
    <property type="component" value="Chromosome"/>
</dbReference>
<dbReference type="GO" id="GO:0005737">
    <property type="term" value="C:cytoplasm"/>
    <property type="evidence" value="ECO:0007669"/>
    <property type="project" value="UniProtKB-SubCell"/>
</dbReference>
<dbReference type="GO" id="GO:0005524">
    <property type="term" value="F:ATP binding"/>
    <property type="evidence" value="ECO:0007669"/>
    <property type="project" value="UniProtKB-UniRule"/>
</dbReference>
<dbReference type="GO" id="GO:0046872">
    <property type="term" value="F:metal ion binding"/>
    <property type="evidence" value="ECO:0007669"/>
    <property type="project" value="UniProtKB-KW"/>
</dbReference>
<dbReference type="GO" id="GO:0004594">
    <property type="term" value="F:pantothenate kinase activity"/>
    <property type="evidence" value="ECO:0007669"/>
    <property type="project" value="UniProtKB-UniRule"/>
</dbReference>
<dbReference type="GO" id="GO:0015937">
    <property type="term" value="P:coenzyme A biosynthetic process"/>
    <property type="evidence" value="ECO:0007669"/>
    <property type="project" value="UniProtKB-UniRule"/>
</dbReference>
<dbReference type="CDD" id="cd24015">
    <property type="entry name" value="ASKHA_NBD_PanK-III"/>
    <property type="match status" value="1"/>
</dbReference>
<dbReference type="Gene3D" id="3.30.420.40">
    <property type="match status" value="2"/>
</dbReference>
<dbReference type="HAMAP" id="MF_01274">
    <property type="entry name" value="Pantothen_kinase_3"/>
    <property type="match status" value="1"/>
</dbReference>
<dbReference type="InterPro" id="IPR043129">
    <property type="entry name" value="ATPase_NBD"/>
</dbReference>
<dbReference type="InterPro" id="IPR004619">
    <property type="entry name" value="Type_III_PanK"/>
</dbReference>
<dbReference type="NCBIfam" id="TIGR00671">
    <property type="entry name" value="baf"/>
    <property type="match status" value="1"/>
</dbReference>
<dbReference type="NCBIfam" id="NF009847">
    <property type="entry name" value="PRK13318.1-5"/>
    <property type="match status" value="1"/>
</dbReference>
<dbReference type="NCBIfam" id="NF009848">
    <property type="entry name" value="PRK13318.1-6"/>
    <property type="match status" value="1"/>
</dbReference>
<dbReference type="NCBIfam" id="NF009855">
    <property type="entry name" value="PRK13321.1"/>
    <property type="match status" value="1"/>
</dbReference>
<dbReference type="PANTHER" id="PTHR34265">
    <property type="entry name" value="TYPE III PANTOTHENATE KINASE"/>
    <property type="match status" value="1"/>
</dbReference>
<dbReference type="PANTHER" id="PTHR34265:SF1">
    <property type="entry name" value="TYPE III PANTOTHENATE KINASE"/>
    <property type="match status" value="1"/>
</dbReference>
<dbReference type="Pfam" id="PF03309">
    <property type="entry name" value="Pan_kinase"/>
    <property type="match status" value="1"/>
</dbReference>
<dbReference type="SUPFAM" id="SSF53067">
    <property type="entry name" value="Actin-like ATPase domain"/>
    <property type="match status" value="2"/>
</dbReference>
<feature type="chain" id="PRO_1000054373" description="Type III pantothenate kinase">
    <location>
        <begin position="1"/>
        <end position="255"/>
    </location>
</feature>
<feature type="active site" description="Proton acceptor" evidence="1">
    <location>
        <position position="109"/>
    </location>
</feature>
<feature type="binding site" evidence="1">
    <location>
        <begin position="6"/>
        <end position="13"/>
    </location>
    <ligand>
        <name>ATP</name>
        <dbReference type="ChEBI" id="CHEBI:30616"/>
    </ligand>
</feature>
<feature type="binding site" evidence="1">
    <location>
        <position position="100"/>
    </location>
    <ligand>
        <name>substrate</name>
    </ligand>
</feature>
<feature type="binding site" evidence="1">
    <location>
        <begin position="107"/>
        <end position="110"/>
    </location>
    <ligand>
        <name>substrate</name>
    </ligand>
</feature>
<feature type="binding site" evidence="1">
    <location>
        <position position="129"/>
    </location>
    <ligand>
        <name>K(+)</name>
        <dbReference type="ChEBI" id="CHEBI:29103"/>
    </ligand>
</feature>
<feature type="binding site" evidence="1">
    <location>
        <position position="132"/>
    </location>
    <ligand>
        <name>ATP</name>
        <dbReference type="ChEBI" id="CHEBI:30616"/>
    </ligand>
</feature>
<feature type="binding site" evidence="1">
    <location>
        <position position="184"/>
    </location>
    <ligand>
        <name>substrate</name>
    </ligand>
</feature>
<sequence length="255" mass="27998">MILVIDVGNTNTVFGVYDGKKLLNHWRMETSKGKTSDEYGMFIVSLLSYEKIDVGKIEAVVIASVVPPIMYSLEHAIRKYFKLEPMVVGPGIKTGINIKYENPREVGADRIINAVAALELYGGPLIIVDFGTATTFCAVSSKGEYLGGVICPGIKISAEALFQKTAKLPKIDLVKPETVIGRNTVSSMQSGIIYGYVGEVDYIVRRMKKEMKEDNIKVIATGGLARLIASESETIDEINGLLTLEGLRIIYERNK</sequence>
<comment type="function">
    <text evidence="1">Catalyzes the phosphorylation of pantothenate (Pan), the first step in CoA biosynthesis.</text>
</comment>
<comment type="catalytic activity">
    <reaction evidence="1">
        <text>(R)-pantothenate + ATP = (R)-4'-phosphopantothenate + ADP + H(+)</text>
        <dbReference type="Rhea" id="RHEA:16373"/>
        <dbReference type="ChEBI" id="CHEBI:10986"/>
        <dbReference type="ChEBI" id="CHEBI:15378"/>
        <dbReference type="ChEBI" id="CHEBI:29032"/>
        <dbReference type="ChEBI" id="CHEBI:30616"/>
        <dbReference type="ChEBI" id="CHEBI:456216"/>
        <dbReference type="EC" id="2.7.1.33"/>
    </reaction>
</comment>
<comment type="cofactor">
    <cofactor evidence="1">
        <name>NH4(+)</name>
        <dbReference type="ChEBI" id="CHEBI:28938"/>
    </cofactor>
    <cofactor evidence="1">
        <name>K(+)</name>
        <dbReference type="ChEBI" id="CHEBI:29103"/>
    </cofactor>
    <text evidence="1">A monovalent cation. Ammonium or potassium.</text>
</comment>
<comment type="pathway">
    <text evidence="1">Cofactor biosynthesis; coenzyme A biosynthesis; CoA from (R)-pantothenate: step 1/5.</text>
</comment>
<comment type="subunit">
    <text evidence="1">Homodimer.</text>
</comment>
<comment type="subcellular location">
    <subcellularLocation>
        <location evidence="1">Cytoplasm</location>
    </subcellularLocation>
</comment>
<comment type="similarity">
    <text evidence="1">Belongs to the type III pantothenate kinase family.</text>
</comment>
<gene>
    <name evidence="1" type="primary">coaX</name>
    <name type="ordered locus">Cthe_2588</name>
</gene>
<protein>
    <recommendedName>
        <fullName evidence="1">Type III pantothenate kinase</fullName>
        <ecNumber evidence="1">2.7.1.33</ecNumber>
    </recommendedName>
    <alternativeName>
        <fullName evidence="1">PanK-III</fullName>
    </alternativeName>
    <alternativeName>
        <fullName evidence="1">Pantothenic acid kinase</fullName>
    </alternativeName>
</protein>
<name>COAX_ACET2</name>
<keyword id="KW-0067">ATP-binding</keyword>
<keyword id="KW-0173">Coenzyme A biosynthesis</keyword>
<keyword id="KW-0963">Cytoplasm</keyword>
<keyword id="KW-0418">Kinase</keyword>
<keyword id="KW-0479">Metal-binding</keyword>
<keyword id="KW-0547">Nucleotide-binding</keyword>
<keyword id="KW-0630">Potassium</keyword>
<keyword id="KW-1185">Reference proteome</keyword>
<keyword id="KW-0808">Transferase</keyword>
<reference key="1">
    <citation type="submission" date="2007-02" db="EMBL/GenBank/DDBJ databases">
        <title>Complete sequence of Clostridium thermocellum ATCC 27405.</title>
        <authorList>
            <consortium name="US DOE Joint Genome Institute"/>
            <person name="Copeland A."/>
            <person name="Lucas S."/>
            <person name="Lapidus A."/>
            <person name="Barry K."/>
            <person name="Detter J.C."/>
            <person name="Glavina del Rio T."/>
            <person name="Hammon N."/>
            <person name="Israni S."/>
            <person name="Dalin E."/>
            <person name="Tice H."/>
            <person name="Pitluck S."/>
            <person name="Chertkov O."/>
            <person name="Brettin T."/>
            <person name="Bruce D."/>
            <person name="Han C."/>
            <person name="Tapia R."/>
            <person name="Gilna P."/>
            <person name="Schmutz J."/>
            <person name="Larimer F."/>
            <person name="Land M."/>
            <person name="Hauser L."/>
            <person name="Kyrpides N."/>
            <person name="Mikhailova N."/>
            <person name="Wu J.H.D."/>
            <person name="Newcomb M."/>
            <person name="Richardson P."/>
        </authorList>
    </citation>
    <scope>NUCLEOTIDE SEQUENCE [LARGE SCALE GENOMIC DNA]</scope>
    <source>
        <strain>ATCC 27405 / DSM 1237 / JCM 9322 / NBRC 103400 / NCIMB 10682 / NRRL B-4536 / VPI 7372</strain>
    </source>
</reference>
<proteinExistence type="inferred from homology"/>
<accession>A3DIK9</accession>